<accession>Q09FQ2</accession>
<dbReference type="EMBL" id="DQ923117">
    <property type="protein sequence ID" value="ABI49923.1"/>
    <property type="molecule type" value="Genomic_DNA"/>
</dbReference>
<dbReference type="RefSeq" id="YP_740709.1">
    <property type="nucleotide sequence ID" value="NC_008336.1"/>
</dbReference>
<dbReference type="GeneID" id="4271657"/>
<dbReference type="GO" id="GO:0009706">
    <property type="term" value="C:chloroplast inner membrane"/>
    <property type="evidence" value="ECO:0007669"/>
    <property type="project" value="UniProtKB-SubCell"/>
</dbReference>
<dbReference type="GO" id="GO:0015031">
    <property type="term" value="P:protein transport"/>
    <property type="evidence" value="ECO:0007669"/>
    <property type="project" value="UniProtKB-KW"/>
</dbReference>
<dbReference type="InterPro" id="IPR008896">
    <property type="entry name" value="TIC214"/>
</dbReference>
<dbReference type="PANTHER" id="PTHR33163:SF40">
    <property type="entry name" value="PROTEIN TIC 214"/>
    <property type="match status" value="1"/>
</dbReference>
<dbReference type="PANTHER" id="PTHR33163">
    <property type="entry name" value="PROTEIN TIC 214-RELATED"/>
    <property type="match status" value="1"/>
</dbReference>
<dbReference type="Pfam" id="PF05758">
    <property type="entry name" value="Ycf1"/>
    <property type="match status" value="3"/>
</dbReference>
<geneLocation type="chloroplast"/>
<organism>
    <name type="scientific">Nandina domestica</name>
    <name type="common">Heavenly bamboo</name>
    <dbReference type="NCBI Taxonomy" id="41776"/>
    <lineage>
        <taxon>Eukaryota</taxon>
        <taxon>Viridiplantae</taxon>
        <taxon>Streptophyta</taxon>
        <taxon>Embryophyta</taxon>
        <taxon>Tracheophyta</taxon>
        <taxon>Spermatophyta</taxon>
        <taxon>Magnoliopsida</taxon>
        <taxon>Ranunculales</taxon>
        <taxon>Berberidaceae</taxon>
        <taxon>Nandinoideae</taxon>
        <taxon>Nandineae</taxon>
        <taxon>Nandina</taxon>
    </lineage>
</organism>
<proteinExistence type="inferred from homology"/>
<gene>
    <name evidence="1" type="primary">TIC214</name>
    <name type="synonym">ycf1</name>
</gene>
<comment type="function">
    <text evidence="1">Involved in protein precursor import into chloroplasts. May be part of an intermediate translocation complex acting as a protein-conducting channel at the inner envelope.</text>
</comment>
<comment type="subunit">
    <text evidence="1">Part of the Tic complex.</text>
</comment>
<comment type="subcellular location">
    <subcellularLocation>
        <location evidence="1">Plastid</location>
        <location evidence="1">Chloroplast inner membrane</location>
        <topology evidence="2">Multi-pass membrane protein</topology>
    </subcellularLocation>
</comment>
<comment type="similarity">
    <text evidence="4">Belongs to the TIC214 family.</text>
</comment>
<protein>
    <recommendedName>
        <fullName evidence="1">Protein TIC 214</fullName>
    </recommendedName>
    <alternativeName>
        <fullName evidence="1">Translocon at the inner envelope membrane of chloroplasts 214</fullName>
        <shortName evidence="1">AtTIC214</shortName>
    </alternativeName>
</protein>
<keyword id="KW-0150">Chloroplast</keyword>
<keyword id="KW-0472">Membrane</keyword>
<keyword id="KW-0934">Plastid</keyword>
<keyword id="KW-1001">Plastid inner membrane</keyword>
<keyword id="KW-0653">Protein transport</keyword>
<keyword id="KW-0812">Transmembrane</keyword>
<keyword id="KW-1133">Transmembrane helix</keyword>
<keyword id="KW-0813">Transport</keyword>
<name>TI214_NANDO</name>
<feature type="chain" id="PRO_0000262616" description="Protein TIC 214">
    <location>
        <begin position="1"/>
        <end position="1843"/>
    </location>
</feature>
<feature type="transmembrane region" description="Helical" evidence="2">
    <location>
        <begin position="18"/>
        <end position="38"/>
    </location>
</feature>
<feature type="transmembrane region" description="Helical" evidence="2">
    <location>
        <begin position="64"/>
        <end position="84"/>
    </location>
</feature>
<feature type="transmembrane region" description="Helical" evidence="2">
    <location>
        <begin position="87"/>
        <end position="107"/>
    </location>
</feature>
<feature type="transmembrane region" description="Helical" evidence="2">
    <location>
        <begin position="124"/>
        <end position="144"/>
    </location>
</feature>
<feature type="transmembrane region" description="Helical" evidence="2">
    <location>
        <begin position="172"/>
        <end position="192"/>
    </location>
</feature>
<feature type="transmembrane region" description="Helical" evidence="2">
    <location>
        <begin position="217"/>
        <end position="237"/>
    </location>
</feature>
<feature type="region of interest" description="Disordered" evidence="3">
    <location>
        <begin position="244"/>
        <end position="281"/>
    </location>
</feature>
<feature type="region of interest" description="Disordered" evidence="3">
    <location>
        <begin position="557"/>
        <end position="576"/>
    </location>
</feature>
<feature type="region of interest" description="Disordered" evidence="3">
    <location>
        <begin position="582"/>
        <end position="647"/>
    </location>
</feature>
<feature type="region of interest" description="Disordered" evidence="3">
    <location>
        <begin position="724"/>
        <end position="744"/>
    </location>
</feature>
<feature type="region of interest" description="Disordered" evidence="3">
    <location>
        <begin position="1527"/>
        <end position="1586"/>
    </location>
</feature>
<feature type="compositionally biased region" description="Acidic residues" evidence="3">
    <location>
        <begin position="251"/>
        <end position="264"/>
    </location>
</feature>
<feature type="compositionally biased region" description="Basic and acidic residues" evidence="3">
    <location>
        <begin position="269"/>
        <end position="281"/>
    </location>
</feature>
<feature type="compositionally biased region" description="Low complexity" evidence="3">
    <location>
        <begin position="590"/>
        <end position="639"/>
    </location>
</feature>
<feature type="compositionally biased region" description="Basic and acidic residues" evidence="3">
    <location>
        <begin position="730"/>
        <end position="744"/>
    </location>
</feature>
<feature type="compositionally biased region" description="Basic and acidic residues" evidence="3">
    <location>
        <begin position="1527"/>
        <end position="1540"/>
    </location>
</feature>
<feature type="compositionally biased region" description="Polar residues" evidence="3">
    <location>
        <begin position="1543"/>
        <end position="1562"/>
    </location>
</feature>
<feature type="compositionally biased region" description="Basic and acidic residues" evidence="3">
    <location>
        <begin position="1563"/>
        <end position="1580"/>
    </location>
</feature>
<reference key="1">
    <citation type="journal article" date="2006" name="BMC Plant Biol.">
        <title>Rapid and accurate pyrosequencing of angiosperm plastid genomes.</title>
        <authorList>
            <person name="Moore M.J."/>
            <person name="Dhingra A."/>
            <person name="Soltis P.S."/>
            <person name="Shaw R."/>
            <person name="Farmerie W.G."/>
            <person name="Folta K.M."/>
            <person name="Soltis D.E."/>
        </authorList>
    </citation>
    <scope>NUCLEOTIDE SEQUENCE [LARGE SCALE GENOMIC DNA]</scope>
</reference>
<evidence type="ECO:0000250" key="1">
    <source>
        <dbReference type="UniProtKB" id="P56785"/>
    </source>
</evidence>
<evidence type="ECO:0000255" key="2"/>
<evidence type="ECO:0000256" key="3">
    <source>
        <dbReference type="SAM" id="MobiDB-lite"/>
    </source>
</evidence>
<evidence type="ECO:0000305" key="4"/>
<sequence length="1843" mass="218672">MIFNSFLLGNLLSLCMKIINSVVVVGLYYGFLTTFSIGPSYLFLLRARVMEEGTEKEVSATTGFITGQLMMFISIYYAPLHLALGRPHTITVLVLPYLLFHFFWNNHKHFFDYGSTTRNSMRNLSIQCVFLNNLIFQLFNHFILPSPTLARLVNIYMFRCNNKMLFVTSSFVGWLIGHILFMKWVGLVLFWIRQNRSIRSNKYLVSELRNSMARIRIFSILLFITCVYYLGRIPSPIVTKKLKETSKTEEREESEEETDVEIETTSETKGTKQEQEGAAEKEVKDDKDLFWFEKPLVTLLFDYKRWNRPLRYIKNERFENAVRNEMSQYFFYTCISDGKQRISFTYPPSLSTFFEMIQKKLFLCTTEKISSEELYNHWAYTNEQKRNNLSKEFINRIETLDEGSLDLDILEKKTRLCNDENEQKCLPKIYDPFLNGPHRGTIQNLYSHSSMNNLLITSIKDSIKTLWINKYQGILDTDCREFEKEFAEEPMPNLNLKSPSSQGKFYSENQSKNFFDAATTYPNDQTIIDIEESLEINEIKKTVPRWLYKLTDDLEEEEIENDEESKPDHGIRSRKAKRVVIFTDNEKNQNTPTSTTETTSTAETTSTTETTSTTKNTSTTKNTSTTETTSTTENENTSNQDQSDEVALTRYSQQPDFRRDLIKGSMRAQRRKTVTWELFQATVRSPLFLDRVDKTFFFSFDISGTLKYFFRNWMGKDAEFKISNSEEEDTKEKEKKREEKRQENERIRISETWDTIIFAQAIRGYMLVTQSILRKYIVLPSLIIAKNIGRMLLFQFPEWHEDLKAWNKEMHVKCTYNGVQLSEKEFPKNWLTDGIQIKILFPFCLKPWHRSKVQFDHRDPMKKKGKPENFCFLTVWGMEAELPFGSPRKRPSFFEPIWKEIEKNIIKMKKKCFIALRILKERTKWFIRVSKEKTRWVIKIFLFIKRIMKELAKAKVSPIPLFGLREIDESSINTNQKYYINIKSNQIIHESPIRIRSLDWINYSLTAKKIKDVVDRTSTIRNQIEKITKDKKKLFLTPDRNINPNKIGCDDKGLESLKKIWQKLKRRSNRLIRKCYYFLKFFIERIYTDILFCIINSLRIKVKLFLEAKNKLFYKNSSNDETNKKGIDETNPNTIHFISTIKKSLSNINNSNNNSQIFCDLDSLSQAYVFYKLSQTQVFNKYHLRSVLQYRGTLLFLKDRIKDSFGTQGIFHSESGHKKLRNFRMNEWKNWLRGRYHYQYDFSQTRWSRLVPQKWRNRIHQRCMVQTKNSTYSDLYEKDQLIHYEKQNNYAVELNQKDKFKNYKYDKYDRLSHKYIHYEDKKDSYIYRSPLQVNEAKEFLYNYNTYNYSTYNPKLFFMSGDISLNNYLREDSDTEKNLDRKYFDWKIFNFCLRTKIDIEYWTNMDIGANVNKKTKTQTNYYQIIDKKDLFSIAIHKQINPAKQTKTSFDWMAMNEEILNCPISNLELWFFPEFVSFYNAYKIQPWTIPINLLLLNFNGNENVSEKQNINGKEKKDLPILSKSNQKKSLELKNKEEKKKPAQENIGSDTQKQGNPGSDPSTQQKDIKKNVKEDYDGRSDIQKRKKKKQSTGNIAAELDLFLKRYFLFQLRWDNPLNKKIINNVKVYCLLLRLKNPKEIAIASIQRDEMSLDVMPISKTLTLAKLINKGMLIIEPARLSIKRDGQFLLYQTITISRVHKNKHQTNQRYQEKRNVDKNGLEKSIARHEKLVGNRDKNPLLVLENILSSQRRRELRIRICLNSGNVNVVDRNPVFCNGNNASNCDQFLNEERHLDIDTNKFLKFKLLLWPNYRLEDLACINRYWFDTNNGSRFSMSRIRMYPQLRIS</sequence>